<protein>
    <recommendedName>
        <fullName>Metabotropic glutamate receptor 7</fullName>
        <shortName>mGluR7</shortName>
    </recommendedName>
</protein>
<gene>
    <name type="primary">Grm7</name>
    <name type="synonym">Gprc1g</name>
    <name type="synonym">Mglur7</name>
</gene>
<organism>
    <name type="scientific">Mus musculus</name>
    <name type="common">Mouse</name>
    <dbReference type="NCBI Taxonomy" id="10090"/>
    <lineage>
        <taxon>Eukaryota</taxon>
        <taxon>Metazoa</taxon>
        <taxon>Chordata</taxon>
        <taxon>Craniata</taxon>
        <taxon>Vertebrata</taxon>
        <taxon>Euteleostomi</taxon>
        <taxon>Mammalia</taxon>
        <taxon>Eutheria</taxon>
        <taxon>Euarchontoglires</taxon>
        <taxon>Glires</taxon>
        <taxon>Rodentia</taxon>
        <taxon>Myomorpha</taxon>
        <taxon>Muroidea</taxon>
        <taxon>Muridae</taxon>
        <taxon>Murinae</taxon>
        <taxon>Mus</taxon>
        <taxon>Mus</taxon>
    </lineage>
</organism>
<accession>Q68ED2</accession>
<keyword id="KW-1003">Cell membrane</keyword>
<keyword id="KW-1015">Disulfide bond</keyword>
<keyword id="KW-0297">G-protein coupled receptor</keyword>
<keyword id="KW-0325">Glycoprotein</keyword>
<keyword id="KW-0472">Membrane</keyword>
<keyword id="KW-0597">Phosphoprotein</keyword>
<keyword id="KW-0675">Receptor</keyword>
<keyword id="KW-1185">Reference proteome</keyword>
<keyword id="KW-0716">Sensory transduction</keyword>
<keyword id="KW-0732">Signal</keyword>
<keyword id="KW-0807">Transducer</keyword>
<keyword id="KW-0812">Transmembrane</keyword>
<keyword id="KW-1133">Transmembrane helix</keyword>
<sequence length="915" mass="102219">MVQLGKLLRVLTLMKFPCCVLEVLLCVLAAAARGQEMYAPHSIRIEGDVTLGGLFPVHAKGPSGVPCGDIKRENGIHRLEAMLYALDQINSDPNLLPNVTLGARILDTCSRDTYALEQSLTFVQALIQKDTSDVRCTNGEPPVFVKPEKVVGVIGASGSSVSIMVANILRLFQIPQISYASTAPELSDDRRYDFFSRVVPPDSFQAQAMVDIVKALGWNYVSTLASEGSYGEKGVESFTQISKEAGGLCIAQSVRIPQERKDRTIDFDRIIKQLLDTPNSRAVVIFANDEDIKQILAAAKRADQVGHFLWVGSDSWGSKINPLHQHEDIAEGAITIQPKRATVEGFDAYFTSRTLENNRRNVWFAEYWEENFNCKLTISGSKKEDTDRKCTGQERIGKDSNYEQEGKVQFVIDAVYAMAHALHHMNKDLCADYRGVCPEMEQAGGKKLLKYIRNVNFNGSAGTPVMFNKNGDAPGRYDIFQYQTTNTTNPGYRLIGQWTDELQLNIEDMQWGKGVREIPPSVCTLPCKPGQRKKTQKGTPCCWTCEPCDGYQYQFDEMTCQHCPYDQRPNENRTGCQNIPIIKLEWHSPWAVIPVFLAMLGIIATIFVMATFIRYNDTPIVRASGRELSYVLLTGIFLCYIITFLMIAKPDVAVCSFRRVFLGLGMCISYAALLTKTNRIYRIFEQGKKSVTAPRLISPTSQLAITSSLISVQLLGVFIWFGVDPPNIIIDYDEHKTMNPEQARGVLKCDITDLQIICSLGYSILLMVTCTVYAIKTRGVPENFNEAKPIGFTMYTTCIVWLAFIPIFFGTAQSAEKLYIQTTTLTISMNLSASVALGMLYMPKVYIIIFHPELNVQKRKRSFKAVVTAATMSSRLSHKPSDRPNGEAKTELCENVDPNSPAAKKKYVSYNNLVI</sequence>
<name>GRM7_MOUSE</name>
<evidence type="ECO:0000250" key="1"/>
<evidence type="ECO:0000250" key="2">
    <source>
        <dbReference type="UniProtKB" id="P35400"/>
    </source>
</evidence>
<evidence type="ECO:0000250" key="3">
    <source>
        <dbReference type="UniProtKB" id="Q14831"/>
    </source>
</evidence>
<evidence type="ECO:0000255" key="4"/>
<evidence type="ECO:0000256" key="5">
    <source>
        <dbReference type="SAM" id="MobiDB-lite"/>
    </source>
</evidence>
<evidence type="ECO:0000305" key="6"/>
<evidence type="ECO:0007744" key="7">
    <source>
    </source>
</evidence>
<feature type="signal peptide" evidence="4">
    <location>
        <begin position="1"/>
        <end position="34"/>
    </location>
</feature>
<feature type="chain" id="PRO_0000012939" description="Metabotropic glutamate receptor 7">
    <location>
        <begin position="35"/>
        <end position="915"/>
    </location>
</feature>
<feature type="topological domain" description="Extracellular" evidence="4">
    <location>
        <begin position="35"/>
        <end position="590"/>
    </location>
</feature>
<feature type="transmembrane region" description="Helical; Name=1" evidence="4">
    <location>
        <begin position="591"/>
        <end position="615"/>
    </location>
</feature>
<feature type="topological domain" description="Cytoplasmic" evidence="4">
    <location>
        <begin position="616"/>
        <end position="627"/>
    </location>
</feature>
<feature type="transmembrane region" description="Helical; Name=2" evidence="4">
    <location>
        <begin position="628"/>
        <end position="648"/>
    </location>
</feature>
<feature type="topological domain" description="Extracellular" evidence="4">
    <location>
        <begin position="649"/>
        <end position="654"/>
    </location>
</feature>
<feature type="transmembrane region" description="Helical; Name=3" evidence="4">
    <location>
        <begin position="655"/>
        <end position="675"/>
    </location>
</feature>
<feature type="topological domain" description="Cytoplasmic" evidence="4">
    <location>
        <begin position="676"/>
        <end position="702"/>
    </location>
</feature>
<feature type="transmembrane region" description="Helical; Name=4" evidence="4">
    <location>
        <begin position="703"/>
        <end position="723"/>
    </location>
</feature>
<feature type="topological domain" description="Extracellular" evidence="4">
    <location>
        <begin position="724"/>
        <end position="753"/>
    </location>
</feature>
<feature type="transmembrane region" description="Helical; Name=5" evidence="4">
    <location>
        <begin position="754"/>
        <end position="775"/>
    </location>
</feature>
<feature type="topological domain" description="Cytoplasmic" evidence="4">
    <location>
        <begin position="776"/>
        <end position="788"/>
    </location>
</feature>
<feature type="transmembrane region" description="Helical; Name=6" evidence="4">
    <location>
        <begin position="789"/>
        <end position="810"/>
    </location>
</feature>
<feature type="topological domain" description="Extracellular" evidence="4">
    <location>
        <begin position="811"/>
        <end position="825"/>
    </location>
</feature>
<feature type="transmembrane region" description="Helical; Name=7" evidence="4">
    <location>
        <begin position="826"/>
        <end position="850"/>
    </location>
</feature>
<feature type="topological domain" description="Cytoplasmic" evidence="4">
    <location>
        <begin position="851"/>
        <end position="915"/>
    </location>
</feature>
<feature type="region of interest" description="Disordered" evidence="5">
    <location>
        <begin position="874"/>
        <end position="895"/>
    </location>
</feature>
<feature type="compositionally biased region" description="Basic and acidic residues" evidence="5">
    <location>
        <begin position="879"/>
        <end position="892"/>
    </location>
</feature>
<feature type="binding site" evidence="1">
    <location>
        <position position="159"/>
    </location>
    <ligand>
        <name>L-glutamate</name>
        <dbReference type="ChEBI" id="CHEBI:29985"/>
    </ligand>
</feature>
<feature type="binding site" evidence="1">
    <location>
        <begin position="180"/>
        <end position="182"/>
    </location>
    <ligand>
        <name>L-glutamate</name>
        <dbReference type="ChEBI" id="CHEBI:29985"/>
    </ligand>
</feature>
<feature type="binding site" evidence="1">
    <location>
        <position position="230"/>
    </location>
    <ligand>
        <name>L-glutamate</name>
        <dbReference type="ChEBI" id="CHEBI:29985"/>
    </ligand>
</feature>
<feature type="binding site" evidence="1">
    <location>
        <position position="314"/>
    </location>
    <ligand>
        <name>L-glutamate</name>
        <dbReference type="ChEBI" id="CHEBI:29985"/>
    </ligand>
</feature>
<feature type="binding site" evidence="1">
    <location>
        <position position="407"/>
    </location>
    <ligand>
        <name>L-glutamate</name>
        <dbReference type="ChEBI" id="CHEBI:29985"/>
    </ligand>
</feature>
<feature type="modified residue" description="Phosphoserine" evidence="7">
    <location>
        <position position="900"/>
    </location>
</feature>
<feature type="glycosylation site" description="N-linked (GlcNAc...) asparagine" evidence="4">
    <location>
        <position position="98"/>
    </location>
</feature>
<feature type="glycosylation site" description="N-linked (GlcNAc...) asparagine" evidence="4">
    <location>
        <position position="458"/>
    </location>
</feature>
<feature type="glycosylation site" description="N-linked (GlcNAc...) asparagine" evidence="4">
    <location>
        <position position="486"/>
    </location>
</feature>
<feature type="glycosylation site" description="N-linked (GlcNAc...) asparagine" evidence="4">
    <location>
        <position position="572"/>
    </location>
</feature>
<feature type="disulfide bond" evidence="1">
    <location>
        <begin position="67"/>
        <end position="109"/>
    </location>
</feature>
<feature type="disulfide bond" evidence="1">
    <location>
        <begin position="249"/>
        <end position="541"/>
    </location>
</feature>
<feature type="disulfide bond" evidence="1">
    <location>
        <begin position="374"/>
        <end position="390"/>
    </location>
</feature>
<feature type="disulfide bond" evidence="1">
    <location>
        <begin position="430"/>
        <end position="437"/>
    </location>
</feature>
<feature type="disulfide bond" evidence="1">
    <location>
        <begin position="523"/>
        <end position="542"/>
    </location>
</feature>
<feature type="disulfide bond" evidence="1">
    <location>
        <begin position="527"/>
        <end position="545"/>
    </location>
</feature>
<feature type="disulfide bond" evidence="1">
    <location>
        <begin position="548"/>
        <end position="560"/>
    </location>
</feature>
<feature type="disulfide bond" evidence="1">
    <location>
        <begin position="563"/>
        <end position="576"/>
    </location>
</feature>
<proteinExistence type="evidence at protein level"/>
<comment type="function">
    <text evidence="3">G-protein coupled receptor activated by glutamate that regulates axon outgrowth through the MAPK-cAMP-PKA signaling pathway during neuronal development (By similarity). Ligand binding causes a conformation change that triggers signaling via guanine nucleotide-binding proteins (G proteins) and modulates the activity of downstream effectors, such as adenylate cyclase that it inhibits (By similarity).</text>
</comment>
<comment type="subunit">
    <text evidence="2 3">Homodimer (By similarity). Interacts with PICK1.</text>
</comment>
<comment type="subcellular location">
    <subcellularLocation>
        <location evidence="3">Cell membrane</location>
        <topology evidence="3">Multi-pass membrane protein</topology>
    </subcellularLocation>
</comment>
<comment type="similarity">
    <text evidence="6">Belongs to the G-protein coupled receptor 3 family.</text>
</comment>
<dbReference type="EMBL" id="BC080315">
    <property type="protein sequence ID" value="AAH80315.1"/>
    <property type="molecule type" value="mRNA"/>
</dbReference>
<dbReference type="CCDS" id="CCDS39587.1"/>
<dbReference type="RefSeq" id="NP_796302.2">
    <property type="nucleotide sequence ID" value="NM_177328.3"/>
</dbReference>
<dbReference type="SMR" id="Q68ED2"/>
<dbReference type="BioGRID" id="223811">
    <property type="interactions" value="5"/>
</dbReference>
<dbReference type="DIP" id="DIP-32216N"/>
<dbReference type="FunCoup" id="Q68ED2">
    <property type="interactions" value="855"/>
</dbReference>
<dbReference type="IntAct" id="Q68ED2">
    <property type="interactions" value="2"/>
</dbReference>
<dbReference type="STRING" id="10090.ENSMUSP00000064404"/>
<dbReference type="BindingDB" id="Q68ED2"/>
<dbReference type="ChEMBL" id="CHEMBL3966"/>
<dbReference type="GlyCosmos" id="Q68ED2">
    <property type="glycosylation" value="4 sites, No reported glycans"/>
</dbReference>
<dbReference type="GlyGen" id="Q68ED2">
    <property type="glycosylation" value="5 sites, 3 N-linked glycans (3 sites), 1 O-linked glycan (1 site)"/>
</dbReference>
<dbReference type="iPTMnet" id="Q68ED2"/>
<dbReference type="PhosphoSitePlus" id="Q68ED2"/>
<dbReference type="PaxDb" id="10090-ENSMUSP00000133957"/>
<dbReference type="ProteomicsDB" id="271307"/>
<dbReference type="Antibodypedia" id="10079">
    <property type="antibodies" value="416 antibodies from 34 providers"/>
</dbReference>
<dbReference type="Ensembl" id="ENSMUST00000172951.2">
    <property type="protein sequence ID" value="ENSMUSP00000133957.2"/>
    <property type="gene ID" value="ENSMUSG00000056755.14"/>
</dbReference>
<dbReference type="GeneID" id="108073"/>
<dbReference type="KEGG" id="mmu:108073"/>
<dbReference type="UCSC" id="uc009dds.1">
    <property type="organism name" value="mouse"/>
</dbReference>
<dbReference type="AGR" id="MGI:1351344"/>
<dbReference type="CTD" id="2917"/>
<dbReference type="MGI" id="MGI:1351344">
    <property type="gene designation" value="Grm7"/>
</dbReference>
<dbReference type="VEuPathDB" id="HostDB:ENSMUSG00000056755"/>
<dbReference type="eggNOG" id="KOG1056">
    <property type="taxonomic scope" value="Eukaryota"/>
</dbReference>
<dbReference type="GeneTree" id="ENSGT01030000234648"/>
<dbReference type="HOGENOM" id="CLU_005389_0_0_1"/>
<dbReference type="InParanoid" id="Q68ED2"/>
<dbReference type="OrthoDB" id="425344at2759"/>
<dbReference type="PhylomeDB" id="Q68ED2"/>
<dbReference type="TreeFam" id="TF313240"/>
<dbReference type="Reactome" id="R-MMU-418594">
    <property type="pathway name" value="G alpha (i) signalling events"/>
</dbReference>
<dbReference type="Reactome" id="R-MMU-420499">
    <property type="pathway name" value="Class C/3 (Metabotropic glutamate/pheromone receptors)"/>
</dbReference>
<dbReference type="BioGRID-ORCS" id="108073">
    <property type="hits" value="1 hit in 78 CRISPR screens"/>
</dbReference>
<dbReference type="ChiTaRS" id="Grm7">
    <property type="organism name" value="mouse"/>
</dbReference>
<dbReference type="PRO" id="PR:Q68ED2"/>
<dbReference type="Proteomes" id="UP000000589">
    <property type="component" value="Chromosome 6"/>
</dbReference>
<dbReference type="RNAct" id="Q68ED2">
    <property type="molecule type" value="protein"/>
</dbReference>
<dbReference type="Bgee" id="ENSMUSG00000056755">
    <property type="expression patterns" value="Expressed in medial dorsal nucleus of thalamus and 113 other cell types or tissues"/>
</dbReference>
<dbReference type="ExpressionAtlas" id="Q68ED2">
    <property type="expression patterns" value="baseline and differential"/>
</dbReference>
<dbReference type="GO" id="GO:0098978">
    <property type="term" value="C:glutamatergic synapse"/>
    <property type="evidence" value="ECO:0000314"/>
    <property type="project" value="SynGO"/>
</dbReference>
<dbReference type="GO" id="GO:0048787">
    <property type="term" value="C:presynaptic active zone membrane"/>
    <property type="evidence" value="ECO:0000304"/>
    <property type="project" value="UniProtKB"/>
</dbReference>
<dbReference type="GO" id="GO:0042734">
    <property type="term" value="C:presynaptic membrane"/>
    <property type="evidence" value="ECO:0000314"/>
    <property type="project" value="UniProtKB"/>
</dbReference>
<dbReference type="GO" id="GO:0043235">
    <property type="term" value="C:receptor complex"/>
    <property type="evidence" value="ECO:0000266"/>
    <property type="project" value="MGI"/>
</dbReference>
<dbReference type="GO" id="GO:0005246">
    <property type="term" value="F:calcium channel regulator activity"/>
    <property type="evidence" value="ECO:0000314"/>
    <property type="project" value="MGI"/>
</dbReference>
<dbReference type="GO" id="GO:0008066">
    <property type="term" value="F:glutamate receptor activity"/>
    <property type="evidence" value="ECO:0000250"/>
    <property type="project" value="UniProtKB"/>
</dbReference>
<dbReference type="GO" id="GO:0001642">
    <property type="term" value="F:group III metabotropic glutamate receptor activity"/>
    <property type="evidence" value="ECO:0000250"/>
    <property type="project" value="UniProtKB"/>
</dbReference>
<dbReference type="GO" id="GO:0030165">
    <property type="term" value="F:PDZ domain binding"/>
    <property type="evidence" value="ECO:0000304"/>
    <property type="project" value="UniProtKB"/>
</dbReference>
<dbReference type="GO" id="GO:0046983">
    <property type="term" value="F:protein dimerization activity"/>
    <property type="evidence" value="ECO:0000250"/>
    <property type="project" value="UniProtKB"/>
</dbReference>
<dbReference type="GO" id="GO:0005245">
    <property type="term" value="F:voltage-gated calcium channel activity"/>
    <property type="evidence" value="ECO:0000314"/>
    <property type="project" value="UniProtKB"/>
</dbReference>
<dbReference type="GO" id="GO:0007196">
    <property type="term" value="P:adenylate cyclase-inhibiting G protein-coupled glutamate receptor signaling pathway"/>
    <property type="evidence" value="ECO:0000250"/>
    <property type="project" value="UniProtKB"/>
</dbReference>
<dbReference type="GO" id="GO:0030534">
    <property type="term" value="P:adult behavior"/>
    <property type="evidence" value="ECO:0000315"/>
    <property type="project" value="MGI"/>
</dbReference>
<dbReference type="GO" id="GO:0008306">
    <property type="term" value="P:associative learning"/>
    <property type="evidence" value="ECO:0000315"/>
    <property type="project" value="MGI"/>
</dbReference>
<dbReference type="GO" id="GO:0061564">
    <property type="term" value="P:axon development"/>
    <property type="evidence" value="ECO:0000250"/>
    <property type="project" value="UniProtKB"/>
</dbReference>
<dbReference type="GO" id="GO:0001662">
    <property type="term" value="P:behavioral fear response"/>
    <property type="evidence" value="ECO:0000315"/>
    <property type="project" value="MGI"/>
</dbReference>
<dbReference type="GO" id="GO:0007268">
    <property type="term" value="P:chemical synaptic transmission"/>
    <property type="evidence" value="ECO:0000314"/>
    <property type="project" value="UniProtKB"/>
</dbReference>
<dbReference type="GO" id="GO:0001661">
    <property type="term" value="P:conditioned taste aversion"/>
    <property type="evidence" value="ECO:0000315"/>
    <property type="project" value="MGI"/>
</dbReference>
<dbReference type="GO" id="GO:0007613">
    <property type="term" value="P:memory"/>
    <property type="evidence" value="ECO:0000315"/>
    <property type="project" value="MGI"/>
</dbReference>
<dbReference type="GO" id="GO:0033555">
    <property type="term" value="P:multicellular organismal response to stress"/>
    <property type="evidence" value="ECO:0000315"/>
    <property type="project" value="MGI"/>
</dbReference>
<dbReference type="GO" id="GO:0050877">
    <property type="term" value="P:nervous system process"/>
    <property type="evidence" value="ECO:0000315"/>
    <property type="project" value="MGI"/>
</dbReference>
<dbReference type="GO" id="GO:0099171">
    <property type="term" value="P:presynaptic modulation of chemical synaptic transmission"/>
    <property type="evidence" value="ECO:0000314"/>
    <property type="project" value="SynGO"/>
</dbReference>
<dbReference type="GO" id="GO:0007614">
    <property type="term" value="P:short-term memory"/>
    <property type="evidence" value="ECO:0000315"/>
    <property type="project" value="MGI"/>
</dbReference>
<dbReference type="GO" id="GO:0019226">
    <property type="term" value="P:transmission of nerve impulse"/>
    <property type="evidence" value="ECO:0000315"/>
    <property type="project" value="MGI"/>
</dbReference>
<dbReference type="CDD" id="cd15451">
    <property type="entry name" value="7tmC_mGluR7"/>
    <property type="match status" value="1"/>
</dbReference>
<dbReference type="CDD" id="cd06376">
    <property type="entry name" value="PBP1_mGluR_groupIII"/>
    <property type="match status" value="1"/>
</dbReference>
<dbReference type="FunFam" id="3.40.50.2300:FF:000196">
    <property type="entry name" value="Glutamate metabotropic receptor 7"/>
    <property type="match status" value="1"/>
</dbReference>
<dbReference type="FunFam" id="3.40.50.2300:FF:000009">
    <property type="entry name" value="Glutamate receptor, metabotropic 4"/>
    <property type="match status" value="1"/>
</dbReference>
<dbReference type="FunFam" id="2.10.50.30:FF:000001">
    <property type="entry name" value="metabotropic glutamate receptor 1"/>
    <property type="match status" value="1"/>
</dbReference>
<dbReference type="FunFam" id="3.40.50.2300:FF:000176">
    <property type="entry name" value="metabotropic glutamate receptor 7"/>
    <property type="match status" value="1"/>
</dbReference>
<dbReference type="Gene3D" id="3.40.50.2300">
    <property type="match status" value="2"/>
</dbReference>
<dbReference type="Gene3D" id="2.10.50.30">
    <property type="entry name" value="GPCR, family 3, nine cysteines domain"/>
    <property type="match status" value="1"/>
</dbReference>
<dbReference type="InterPro" id="IPR001828">
    <property type="entry name" value="ANF_lig-bd_rcpt"/>
</dbReference>
<dbReference type="InterPro" id="IPR000337">
    <property type="entry name" value="GPCR_3"/>
</dbReference>
<dbReference type="InterPro" id="IPR011500">
    <property type="entry name" value="GPCR_3_9-Cys_dom"/>
</dbReference>
<dbReference type="InterPro" id="IPR038550">
    <property type="entry name" value="GPCR_3_9-Cys_sf"/>
</dbReference>
<dbReference type="InterPro" id="IPR017978">
    <property type="entry name" value="GPCR_3_C"/>
</dbReference>
<dbReference type="InterPro" id="IPR017979">
    <property type="entry name" value="GPCR_3_CS"/>
</dbReference>
<dbReference type="InterPro" id="IPR001883">
    <property type="entry name" value="GPCR_3_mGluR7"/>
</dbReference>
<dbReference type="InterPro" id="IPR000162">
    <property type="entry name" value="GPCR_3_mtglu_rcpt"/>
</dbReference>
<dbReference type="InterPro" id="IPR050726">
    <property type="entry name" value="mGluR"/>
</dbReference>
<dbReference type="InterPro" id="IPR028082">
    <property type="entry name" value="Peripla_BP_I"/>
</dbReference>
<dbReference type="PANTHER" id="PTHR24060">
    <property type="entry name" value="METABOTROPIC GLUTAMATE RECEPTOR"/>
    <property type="match status" value="1"/>
</dbReference>
<dbReference type="Pfam" id="PF00003">
    <property type="entry name" value="7tm_3"/>
    <property type="match status" value="1"/>
</dbReference>
<dbReference type="Pfam" id="PF01094">
    <property type="entry name" value="ANF_receptor"/>
    <property type="match status" value="1"/>
</dbReference>
<dbReference type="Pfam" id="PF07562">
    <property type="entry name" value="NCD3G"/>
    <property type="match status" value="1"/>
</dbReference>
<dbReference type="PRINTS" id="PR00248">
    <property type="entry name" value="GPCRMGR"/>
</dbReference>
<dbReference type="PRINTS" id="PR01057">
    <property type="entry name" value="MTABOTROPC7R"/>
</dbReference>
<dbReference type="PRINTS" id="PR00593">
    <property type="entry name" value="MTABOTROPICR"/>
</dbReference>
<dbReference type="SUPFAM" id="SSF53822">
    <property type="entry name" value="Periplasmic binding protein-like I"/>
    <property type="match status" value="1"/>
</dbReference>
<dbReference type="PROSITE" id="PS00979">
    <property type="entry name" value="G_PROTEIN_RECEP_F3_1"/>
    <property type="match status" value="1"/>
</dbReference>
<dbReference type="PROSITE" id="PS00980">
    <property type="entry name" value="G_PROTEIN_RECEP_F3_2"/>
    <property type="match status" value="1"/>
</dbReference>
<dbReference type="PROSITE" id="PS00981">
    <property type="entry name" value="G_PROTEIN_RECEP_F3_3"/>
    <property type="match status" value="1"/>
</dbReference>
<dbReference type="PROSITE" id="PS50259">
    <property type="entry name" value="G_PROTEIN_RECEP_F3_4"/>
    <property type="match status" value="1"/>
</dbReference>
<reference key="1">
    <citation type="journal article" date="2004" name="Genome Res.">
        <title>The status, quality, and expansion of the NIH full-length cDNA project: the Mammalian Gene Collection (MGC).</title>
        <authorList>
            <consortium name="The MGC Project Team"/>
        </authorList>
    </citation>
    <scope>NUCLEOTIDE SEQUENCE [LARGE SCALE MRNA]</scope>
    <source>
        <strain>C57BL/6J</strain>
        <tissue>Brain</tissue>
    </source>
</reference>
<reference key="2">
    <citation type="journal article" date="2010" name="Cell">
        <title>A tissue-specific atlas of mouse protein phosphorylation and expression.</title>
        <authorList>
            <person name="Huttlin E.L."/>
            <person name="Jedrychowski M.P."/>
            <person name="Elias J.E."/>
            <person name="Goswami T."/>
            <person name="Rad R."/>
            <person name="Beausoleil S.A."/>
            <person name="Villen J."/>
            <person name="Haas W."/>
            <person name="Sowa M.E."/>
            <person name="Gygi S.P."/>
        </authorList>
    </citation>
    <scope>PHOSPHORYLATION [LARGE SCALE ANALYSIS] AT SER-900</scope>
    <scope>IDENTIFICATION BY MASS SPECTROMETRY [LARGE SCALE ANALYSIS]</scope>
    <source>
        <tissue>Brain</tissue>
    </source>
</reference>